<sequence>MKASQFFISTLKEAPADAEVVSHKLMTRAGLIKKLGAGIYNYMPMGLRVIRKVEAIVREEMNRAGAVEVTMPVVQPAEMWEETGRFEKMGPELLRIKDRHGRDFVIQPTSEEVVTDIARQELKSYKQLPKNFYQIQTKFRDERRPRFGLMRGREFIMKDAYSFDKDRDTAQISYQTMRAAYKRIFDRFGLQYRAVRADSGAIGGDLSEEFQVIASTGEDAIVYCPSSDYAANIEKAEALAPAGPRPAAAQAMARVATPGNSTCESVAGQLGLPLSQTVKSLVLATDKLDDKGDVAGSQVWLLLLRGDHEMNEIKVAKVPGLDVGFRFATVAEIEEHFGCQPGYLGPIGLKKPVKLVVDREVAVMADWVCGANEADFHITGVNFGRDLPEPDVVADLRNVVAGDKSPDGAGELAIERGIEVGHVFYLGTKYSQAMNATFLAENGKPSLFEMGCYGIGVTRLPAAAIEQNHDERGIIWPDAIAPFTVVVCPIGMDRSEPVKEAAEKLHAELLALGVDVILDDRGERPGAMFADWELIGVPHRVVLSDRGLKEGQVEYQHRRDTEATKMAAADVLGHLKQRLGL</sequence>
<proteinExistence type="inferred from homology"/>
<feature type="chain" id="PRO_1000199372" description="Proline--tRNA ligase">
    <location>
        <begin position="1"/>
        <end position="581"/>
    </location>
</feature>
<dbReference type="EC" id="6.1.1.15" evidence="1"/>
<dbReference type="EMBL" id="CP000884">
    <property type="protein sequence ID" value="ABX38110.1"/>
    <property type="molecule type" value="Genomic_DNA"/>
</dbReference>
<dbReference type="RefSeq" id="WP_012207279.1">
    <property type="nucleotide sequence ID" value="NC_010002.1"/>
</dbReference>
<dbReference type="SMR" id="A9BP65"/>
<dbReference type="STRING" id="398578.Daci_5481"/>
<dbReference type="GeneID" id="24119255"/>
<dbReference type="KEGG" id="dac:Daci_5481"/>
<dbReference type="eggNOG" id="COG0442">
    <property type="taxonomic scope" value="Bacteria"/>
</dbReference>
<dbReference type="HOGENOM" id="CLU_016739_0_0_4"/>
<dbReference type="Proteomes" id="UP000000784">
    <property type="component" value="Chromosome"/>
</dbReference>
<dbReference type="GO" id="GO:0005829">
    <property type="term" value="C:cytosol"/>
    <property type="evidence" value="ECO:0007669"/>
    <property type="project" value="TreeGrafter"/>
</dbReference>
<dbReference type="GO" id="GO:0002161">
    <property type="term" value="F:aminoacyl-tRNA deacylase activity"/>
    <property type="evidence" value="ECO:0007669"/>
    <property type="project" value="InterPro"/>
</dbReference>
<dbReference type="GO" id="GO:0005524">
    <property type="term" value="F:ATP binding"/>
    <property type="evidence" value="ECO:0007669"/>
    <property type="project" value="UniProtKB-UniRule"/>
</dbReference>
<dbReference type="GO" id="GO:0004827">
    <property type="term" value="F:proline-tRNA ligase activity"/>
    <property type="evidence" value="ECO:0007669"/>
    <property type="project" value="UniProtKB-UniRule"/>
</dbReference>
<dbReference type="GO" id="GO:0006433">
    <property type="term" value="P:prolyl-tRNA aminoacylation"/>
    <property type="evidence" value="ECO:0007669"/>
    <property type="project" value="UniProtKB-UniRule"/>
</dbReference>
<dbReference type="CDD" id="cd04334">
    <property type="entry name" value="ProRS-INS"/>
    <property type="match status" value="1"/>
</dbReference>
<dbReference type="CDD" id="cd00861">
    <property type="entry name" value="ProRS_anticodon_short"/>
    <property type="match status" value="1"/>
</dbReference>
<dbReference type="CDD" id="cd00779">
    <property type="entry name" value="ProRS_core_prok"/>
    <property type="match status" value="1"/>
</dbReference>
<dbReference type="FunFam" id="3.30.930.10:FF:000066">
    <property type="entry name" value="Proline--tRNA ligase"/>
    <property type="match status" value="1"/>
</dbReference>
<dbReference type="Gene3D" id="3.40.50.800">
    <property type="entry name" value="Anticodon-binding domain"/>
    <property type="match status" value="1"/>
</dbReference>
<dbReference type="Gene3D" id="3.30.930.10">
    <property type="entry name" value="Bira Bifunctional Protein, Domain 2"/>
    <property type="match status" value="2"/>
</dbReference>
<dbReference type="Gene3D" id="3.90.960.10">
    <property type="entry name" value="YbaK/aminoacyl-tRNA synthetase-associated domain"/>
    <property type="match status" value="1"/>
</dbReference>
<dbReference type="HAMAP" id="MF_01569">
    <property type="entry name" value="Pro_tRNA_synth_type1"/>
    <property type="match status" value="1"/>
</dbReference>
<dbReference type="InterPro" id="IPR002314">
    <property type="entry name" value="aa-tRNA-synt_IIb"/>
</dbReference>
<dbReference type="InterPro" id="IPR006195">
    <property type="entry name" value="aa-tRNA-synth_II"/>
</dbReference>
<dbReference type="InterPro" id="IPR045864">
    <property type="entry name" value="aa-tRNA-synth_II/BPL/LPL"/>
</dbReference>
<dbReference type="InterPro" id="IPR004154">
    <property type="entry name" value="Anticodon-bd"/>
</dbReference>
<dbReference type="InterPro" id="IPR036621">
    <property type="entry name" value="Anticodon-bd_dom_sf"/>
</dbReference>
<dbReference type="InterPro" id="IPR002316">
    <property type="entry name" value="Pro-tRNA-ligase_IIa"/>
</dbReference>
<dbReference type="InterPro" id="IPR004500">
    <property type="entry name" value="Pro-tRNA-synth_IIa_bac-type"/>
</dbReference>
<dbReference type="InterPro" id="IPR023717">
    <property type="entry name" value="Pro-tRNA-Synthase_IIa_type1"/>
</dbReference>
<dbReference type="InterPro" id="IPR050062">
    <property type="entry name" value="Pro-tRNA_synthetase"/>
</dbReference>
<dbReference type="InterPro" id="IPR044140">
    <property type="entry name" value="ProRS_anticodon_short"/>
</dbReference>
<dbReference type="InterPro" id="IPR033730">
    <property type="entry name" value="ProRS_core_prok"/>
</dbReference>
<dbReference type="InterPro" id="IPR036754">
    <property type="entry name" value="YbaK/aa-tRNA-synt-asso_dom_sf"/>
</dbReference>
<dbReference type="InterPro" id="IPR007214">
    <property type="entry name" value="YbaK/aa-tRNA-synth-assoc-dom"/>
</dbReference>
<dbReference type="NCBIfam" id="NF006625">
    <property type="entry name" value="PRK09194.1"/>
    <property type="match status" value="1"/>
</dbReference>
<dbReference type="NCBIfam" id="TIGR00409">
    <property type="entry name" value="proS_fam_II"/>
    <property type="match status" value="1"/>
</dbReference>
<dbReference type="PANTHER" id="PTHR42753">
    <property type="entry name" value="MITOCHONDRIAL RIBOSOME PROTEIN L39/PROLYL-TRNA LIGASE FAMILY MEMBER"/>
    <property type="match status" value="1"/>
</dbReference>
<dbReference type="PANTHER" id="PTHR42753:SF2">
    <property type="entry name" value="PROLINE--TRNA LIGASE"/>
    <property type="match status" value="1"/>
</dbReference>
<dbReference type="Pfam" id="PF03129">
    <property type="entry name" value="HGTP_anticodon"/>
    <property type="match status" value="1"/>
</dbReference>
<dbReference type="Pfam" id="PF00587">
    <property type="entry name" value="tRNA-synt_2b"/>
    <property type="match status" value="1"/>
</dbReference>
<dbReference type="Pfam" id="PF04073">
    <property type="entry name" value="tRNA_edit"/>
    <property type="match status" value="1"/>
</dbReference>
<dbReference type="PIRSF" id="PIRSF001535">
    <property type="entry name" value="ProRS_1"/>
    <property type="match status" value="1"/>
</dbReference>
<dbReference type="PRINTS" id="PR01046">
    <property type="entry name" value="TRNASYNTHPRO"/>
</dbReference>
<dbReference type="SUPFAM" id="SSF52954">
    <property type="entry name" value="Class II aaRS ABD-related"/>
    <property type="match status" value="1"/>
</dbReference>
<dbReference type="SUPFAM" id="SSF55681">
    <property type="entry name" value="Class II aaRS and biotin synthetases"/>
    <property type="match status" value="1"/>
</dbReference>
<dbReference type="SUPFAM" id="SSF55826">
    <property type="entry name" value="YbaK/ProRS associated domain"/>
    <property type="match status" value="1"/>
</dbReference>
<dbReference type="PROSITE" id="PS50862">
    <property type="entry name" value="AA_TRNA_LIGASE_II"/>
    <property type="match status" value="1"/>
</dbReference>
<evidence type="ECO:0000255" key="1">
    <source>
        <dbReference type="HAMAP-Rule" id="MF_01569"/>
    </source>
</evidence>
<keyword id="KW-0030">Aminoacyl-tRNA synthetase</keyword>
<keyword id="KW-0067">ATP-binding</keyword>
<keyword id="KW-0963">Cytoplasm</keyword>
<keyword id="KW-0436">Ligase</keyword>
<keyword id="KW-0547">Nucleotide-binding</keyword>
<keyword id="KW-0648">Protein biosynthesis</keyword>
<keyword id="KW-1185">Reference proteome</keyword>
<gene>
    <name evidence="1" type="primary">proS</name>
    <name type="ordered locus">Daci_5481</name>
</gene>
<reference key="1">
    <citation type="submission" date="2007-11" db="EMBL/GenBank/DDBJ databases">
        <title>Complete sequence of Delftia acidovorans DSM 14801 / SPH-1.</title>
        <authorList>
            <person name="Copeland A."/>
            <person name="Lucas S."/>
            <person name="Lapidus A."/>
            <person name="Barry K."/>
            <person name="Glavina del Rio T."/>
            <person name="Dalin E."/>
            <person name="Tice H."/>
            <person name="Pitluck S."/>
            <person name="Lowry S."/>
            <person name="Clum A."/>
            <person name="Schmutz J."/>
            <person name="Larimer F."/>
            <person name="Land M."/>
            <person name="Hauser L."/>
            <person name="Kyrpides N."/>
            <person name="Kim E."/>
            <person name="Schleheck D."/>
            <person name="Richardson P."/>
        </authorList>
    </citation>
    <scope>NUCLEOTIDE SEQUENCE [LARGE SCALE GENOMIC DNA]</scope>
    <source>
        <strain>DSM 14801 / SPH-1</strain>
    </source>
</reference>
<organism>
    <name type="scientific">Delftia acidovorans (strain DSM 14801 / SPH-1)</name>
    <dbReference type="NCBI Taxonomy" id="398578"/>
    <lineage>
        <taxon>Bacteria</taxon>
        <taxon>Pseudomonadati</taxon>
        <taxon>Pseudomonadota</taxon>
        <taxon>Betaproteobacteria</taxon>
        <taxon>Burkholderiales</taxon>
        <taxon>Comamonadaceae</taxon>
        <taxon>Delftia</taxon>
    </lineage>
</organism>
<comment type="function">
    <text evidence="1">Catalyzes the attachment of proline to tRNA(Pro) in a two-step reaction: proline is first activated by ATP to form Pro-AMP and then transferred to the acceptor end of tRNA(Pro). As ProRS can inadvertently accommodate and process non-cognate amino acids such as alanine and cysteine, to avoid such errors it has two additional distinct editing activities against alanine. One activity is designated as 'pretransfer' editing and involves the tRNA(Pro)-independent hydrolysis of activated Ala-AMP. The other activity is designated 'posttransfer' editing and involves deacylation of mischarged Ala-tRNA(Pro). The misacylated Cys-tRNA(Pro) is not edited by ProRS.</text>
</comment>
<comment type="catalytic activity">
    <reaction evidence="1">
        <text>tRNA(Pro) + L-proline + ATP = L-prolyl-tRNA(Pro) + AMP + diphosphate</text>
        <dbReference type="Rhea" id="RHEA:14305"/>
        <dbReference type="Rhea" id="RHEA-COMP:9700"/>
        <dbReference type="Rhea" id="RHEA-COMP:9702"/>
        <dbReference type="ChEBI" id="CHEBI:30616"/>
        <dbReference type="ChEBI" id="CHEBI:33019"/>
        <dbReference type="ChEBI" id="CHEBI:60039"/>
        <dbReference type="ChEBI" id="CHEBI:78442"/>
        <dbReference type="ChEBI" id="CHEBI:78532"/>
        <dbReference type="ChEBI" id="CHEBI:456215"/>
        <dbReference type="EC" id="6.1.1.15"/>
    </reaction>
</comment>
<comment type="subunit">
    <text evidence="1">Homodimer.</text>
</comment>
<comment type="subcellular location">
    <subcellularLocation>
        <location evidence="1">Cytoplasm</location>
    </subcellularLocation>
</comment>
<comment type="domain">
    <text evidence="1">Consists of three domains: the N-terminal catalytic domain, the editing domain and the C-terminal anticodon-binding domain.</text>
</comment>
<comment type="similarity">
    <text evidence="1">Belongs to the class-II aminoacyl-tRNA synthetase family. ProS type 1 subfamily.</text>
</comment>
<protein>
    <recommendedName>
        <fullName evidence="1">Proline--tRNA ligase</fullName>
        <ecNumber evidence="1">6.1.1.15</ecNumber>
    </recommendedName>
    <alternativeName>
        <fullName evidence="1">Prolyl-tRNA synthetase</fullName>
        <shortName evidence="1">ProRS</shortName>
    </alternativeName>
</protein>
<accession>A9BP65</accession>
<name>SYP_DELAS</name>